<keyword id="KW-0963">Cytoplasm</keyword>
<keyword id="KW-0570">Pentose shunt</keyword>
<keyword id="KW-0704">Schiff base</keyword>
<keyword id="KW-0808">Transferase</keyword>
<organism>
    <name type="scientific">Escherichia coli O104:H4 (strain 2009EL-2071)</name>
    <dbReference type="NCBI Taxonomy" id="1133853"/>
    <lineage>
        <taxon>Bacteria</taxon>
        <taxon>Pseudomonadati</taxon>
        <taxon>Pseudomonadota</taxon>
        <taxon>Gammaproteobacteria</taxon>
        <taxon>Enterobacterales</taxon>
        <taxon>Enterobacteriaceae</taxon>
        <taxon>Escherichia</taxon>
    </lineage>
</organism>
<protein>
    <recommendedName>
        <fullName>Transaldolase</fullName>
        <ecNumber>2.2.1.2</ecNumber>
    </recommendedName>
</protein>
<comment type="function">
    <text evidence="2">Transaldolase is important for the balance of metabolites in the pentose-phosphate pathway.</text>
</comment>
<comment type="catalytic activity">
    <reaction evidence="2">
        <text>D-sedoheptulose 7-phosphate + D-glyceraldehyde 3-phosphate = D-erythrose 4-phosphate + beta-D-fructose 6-phosphate</text>
        <dbReference type="Rhea" id="RHEA:17053"/>
        <dbReference type="ChEBI" id="CHEBI:16897"/>
        <dbReference type="ChEBI" id="CHEBI:57483"/>
        <dbReference type="ChEBI" id="CHEBI:57634"/>
        <dbReference type="ChEBI" id="CHEBI:59776"/>
        <dbReference type="EC" id="2.2.1.2"/>
    </reaction>
</comment>
<comment type="pathway">
    <text>Carbohydrate degradation; pentose phosphate pathway; D-glyceraldehyde 3-phosphate and beta-D-fructose 6-phosphate from D-ribose 5-phosphate and D-xylulose 5-phosphate (non-oxidative stage): step 2/3.</text>
</comment>
<comment type="subunit">
    <text evidence="2">Homodimer.</text>
</comment>
<comment type="subcellular location">
    <subcellularLocation>
        <location evidence="2">Cytoplasm</location>
    </subcellularLocation>
</comment>
<comment type="similarity">
    <text evidence="3">Belongs to the transaldolase family. Type 1 subfamily.</text>
</comment>
<accession>K0BE10</accession>
<reference key="1">
    <citation type="journal article" date="2012" name="PLoS ONE">
        <title>Genomic comparison of Escherichia coli O104:H4 isolates from 2009 and 2011 reveals plasmid, and prophage heterogeneity, including Shiga toxin encoding phage stx2.</title>
        <authorList>
            <person name="Ahmed S.A."/>
            <person name="Awosika J."/>
            <person name="Baldwin C."/>
            <person name="Bishop-Lilly K.A."/>
            <person name="Biswas B."/>
            <person name="Broomall S."/>
            <person name="Chain P.S."/>
            <person name="Chertkov O."/>
            <person name="Chokoshvili O."/>
            <person name="Coyne S."/>
            <person name="Davenport K."/>
            <person name="Detter J.C."/>
            <person name="Dorman W."/>
            <person name="Erkkila T.H."/>
            <person name="Folster J.P."/>
            <person name="Frey K.G."/>
            <person name="George M."/>
            <person name="Gleasner C."/>
            <person name="Henry M."/>
            <person name="Hill K.K."/>
            <person name="Hubbard K."/>
            <person name="Insalaco J."/>
            <person name="Johnson S."/>
            <person name="Kitzmiller A."/>
            <person name="Krepps M."/>
            <person name="Lo C.C."/>
            <person name="Luu T."/>
            <person name="McNew L.A."/>
            <person name="Minogue T."/>
            <person name="Munk C.A."/>
            <person name="Osborne B."/>
            <person name="Patel M."/>
            <person name="Reitenga K.G."/>
            <person name="Rosenzweig C.N."/>
            <person name="Shea A."/>
            <person name="Shen X."/>
            <person name="Strockbine N."/>
            <person name="Tarr C."/>
            <person name="Teshima H."/>
            <person name="van Gieson E."/>
            <person name="Verratti K."/>
            <person name="Wolcott M."/>
            <person name="Xie G."/>
            <person name="Sozhamannan S."/>
            <person name="Gibbons H.S."/>
        </authorList>
    </citation>
    <scope>NUCLEOTIDE SEQUENCE [LARGE SCALE GENOMIC DNA]</scope>
    <source>
        <strain>2009EL-2071</strain>
    </source>
</reference>
<feature type="initiator methionine" description="Removed" evidence="1">
    <location>
        <position position="1"/>
    </location>
</feature>
<feature type="chain" id="PRO_0000423396" description="Transaldolase">
    <location>
        <begin position="2"/>
        <end position="317"/>
    </location>
</feature>
<feature type="active site" description="Schiff-base intermediate with substrate" evidence="1">
    <location>
        <position position="132"/>
    </location>
</feature>
<gene>
    <name type="primary">talB</name>
    <name type="ordered locus">O3O_03880</name>
</gene>
<evidence type="ECO:0000250" key="1"/>
<evidence type="ECO:0000250" key="2">
    <source>
        <dbReference type="UniProtKB" id="P0A870"/>
    </source>
</evidence>
<evidence type="ECO:0000305" key="3"/>
<proteinExistence type="inferred from homology"/>
<sequence>MTDKLTSLRQYTTVVADTGDIAAMKLYQPQDATTNPSLILNAAQIPEYRKLIDDAVAWAKQQSNDRAQQIVDATDKLAVNIGLEILKLVPGRISTEVDARLSYDTEASIAKAKRLIKLYNDAGISNDRILIKLASTWQGIRAAEQLEKEGINCNLTLLFSFAQARACAEAGVFLISPFVGRILDWYKANTDKKEYAPAEDPGVVSVSEIYQYYKEHGYETVVMGASFRNIGEILELAGCDRLTIAPTLLKELAESEGAIERKLSYTGEVKARPARITESEFLWQHNQDPMAVDKLAEGIRKFAIDQEKLEKMIGDLL</sequence>
<name>TALB_ECO1E</name>
<dbReference type="EC" id="2.2.1.2"/>
<dbReference type="EMBL" id="CP003301">
    <property type="protein sequence ID" value="AFS84550.1"/>
    <property type="molecule type" value="Genomic_DNA"/>
</dbReference>
<dbReference type="SMR" id="K0BE10"/>
<dbReference type="KEGG" id="eso:O3O_03880"/>
<dbReference type="PATRIC" id="fig|1133853.3.peg.4527"/>
<dbReference type="HOGENOM" id="CLU_047470_0_1_6"/>
<dbReference type="UniPathway" id="UPA00115">
    <property type="reaction ID" value="UER00414"/>
</dbReference>
<dbReference type="GO" id="GO:0005829">
    <property type="term" value="C:cytosol"/>
    <property type="evidence" value="ECO:0007669"/>
    <property type="project" value="TreeGrafter"/>
</dbReference>
<dbReference type="GO" id="GO:0004801">
    <property type="term" value="F:transaldolase activity"/>
    <property type="evidence" value="ECO:0000314"/>
    <property type="project" value="UniProtKB"/>
</dbReference>
<dbReference type="GO" id="GO:0005975">
    <property type="term" value="P:carbohydrate metabolic process"/>
    <property type="evidence" value="ECO:0007669"/>
    <property type="project" value="InterPro"/>
</dbReference>
<dbReference type="GO" id="GO:0006098">
    <property type="term" value="P:pentose-phosphate shunt"/>
    <property type="evidence" value="ECO:0007669"/>
    <property type="project" value="UniProtKB-UniRule"/>
</dbReference>
<dbReference type="CDD" id="cd00957">
    <property type="entry name" value="Transaldolase_TalAB"/>
    <property type="match status" value="1"/>
</dbReference>
<dbReference type="FunFam" id="3.20.20.70:FF:000002">
    <property type="entry name" value="Transaldolase"/>
    <property type="match status" value="1"/>
</dbReference>
<dbReference type="Gene3D" id="3.20.20.70">
    <property type="entry name" value="Aldolase class I"/>
    <property type="match status" value="1"/>
</dbReference>
<dbReference type="HAMAP" id="MF_00492">
    <property type="entry name" value="Transaldolase_1"/>
    <property type="match status" value="1"/>
</dbReference>
<dbReference type="InterPro" id="IPR013785">
    <property type="entry name" value="Aldolase_TIM"/>
</dbReference>
<dbReference type="InterPro" id="IPR001585">
    <property type="entry name" value="TAL/FSA"/>
</dbReference>
<dbReference type="InterPro" id="IPR004730">
    <property type="entry name" value="Transaldolase_1"/>
</dbReference>
<dbReference type="InterPro" id="IPR018225">
    <property type="entry name" value="Transaldolase_AS"/>
</dbReference>
<dbReference type="NCBIfam" id="NF009001">
    <property type="entry name" value="PRK12346.1"/>
    <property type="match status" value="1"/>
</dbReference>
<dbReference type="NCBIfam" id="TIGR00874">
    <property type="entry name" value="talAB"/>
    <property type="match status" value="1"/>
</dbReference>
<dbReference type="PANTHER" id="PTHR10683">
    <property type="entry name" value="TRANSALDOLASE"/>
    <property type="match status" value="1"/>
</dbReference>
<dbReference type="PANTHER" id="PTHR10683:SF18">
    <property type="entry name" value="TRANSALDOLASE"/>
    <property type="match status" value="1"/>
</dbReference>
<dbReference type="Pfam" id="PF00923">
    <property type="entry name" value="TAL_FSA"/>
    <property type="match status" value="1"/>
</dbReference>
<dbReference type="SUPFAM" id="SSF51569">
    <property type="entry name" value="Aldolase"/>
    <property type="match status" value="1"/>
</dbReference>
<dbReference type="PROSITE" id="PS01054">
    <property type="entry name" value="TRANSALDOLASE_1"/>
    <property type="match status" value="1"/>
</dbReference>
<dbReference type="PROSITE" id="PS00958">
    <property type="entry name" value="TRANSALDOLASE_2"/>
    <property type="match status" value="1"/>
</dbReference>